<name>RL2_SALSV</name>
<accession>B4TXD9</accession>
<gene>
    <name evidence="1" type="primary">rplB</name>
    <name type="ordered locus">SeSA_A3633</name>
</gene>
<protein>
    <recommendedName>
        <fullName evidence="1">Large ribosomal subunit protein uL2</fullName>
    </recommendedName>
    <alternativeName>
        <fullName evidence="3">50S ribosomal protein L2</fullName>
    </alternativeName>
</protein>
<dbReference type="EMBL" id="CP001127">
    <property type="protein sequence ID" value="ACF90684.1"/>
    <property type="molecule type" value="Genomic_DNA"/>
</dbReference>
<dbReference type="RefSeq" id="WP_000301869.1">
    <property type="nucleotide sequence ID" value="NC_011094.1"/>
</dbReference>
<dbReference type="SMR" id="B4TXD9"/>
<dbReference type="GeneID" id="97393170"/>
<dbReference type="KEGG" id="sew:SeSA_A3633"/>
<dbReference type="HOGENOM" id="CLU_036235_2_1_6"/>
<dbReference type="Proteomes" id="UP000001865">
    <property type="component" value="Chromosome"/>
</dbReference>
<dbReference type="GO" id="GO:0005829">
    <property type="term" value="C:cytosol"/>
    <property type="evidence" value="ECO:0007669"/>
    <property type="project" value="UniProtKB-ARBA"/>
</dbReference>
<dbReference type="GO" id="GO:0015934">
    <property type="term" value="C:large ribosomal subunit"/>
    <property type="evidence" value="ECO:0007669"/>
    <property type="project" value="InterPro"/>
</dbReference>
<dbReference type="GO" id="GO:0019843">
    <property type="term" value="F:rRNA binding"/>
    <property type="evidence" value="ECO:0007669"/>
    <property type="project" value="UniProtKB-UniRule"/>
</dbReference>
<dbReference type="GO" id="GO:0003735">
    <property type="term" value="F:structural constituent of ribosome"/>
    <property type="evidence" value="ECO:0007669"/>
    <property type="project" value="InterPro"/>
</dbReference>
<dbReference type="GO" id="GO:0016740">
    <property type="term" value="F:transferase activity"/>
    <property type="evidence" value="ECO:0007669"/>
    <property type="project" value="InterPro"/>
</dbReference>
<dbReference type="GO" id="GO:0002181">
    <property type="term" value="P:cytoplasmic translation"/>
    <property type="evidence" value="ECO:0007669"/>
    <property type="project" value="TreeGrafter"/>
</dbReference>
<dbReference type="FunFam" id="2.30.30.30:FF:000001">
    <property type="entry name" value="50S ribosomal protein L2"/>
    <property type="match status" value="1"/>
</dbReference>
<dbReference type="FunFam" id="2.40.50.140:FF:000003">
    <property type="entry name" value="50S ribosomal protein L2"/>
    <property type="match status" value="1"/>
</dbReference>
<dbReference type="FunFam" id="4.10.950.10:FF:000001">
    <property type="entry name" value="50S ribosomal protein L2"/>
    <property type="match status" value="1"/>
</dbReference>
<dbReference type="Gene3D" id="2.30.30.30">
    <property type="match status" value="1"/>
</dbReference>
<dbReference type="Gene3D" id="2.40.50.140">
    <property type="entry name" value="Nucleic acid-binding proteins"/>
    <property type="match status" value="1"/>
</dbReference>
<dbReference type="Gene3D" id="4.10.950.10">
    <property type="entry name" value="Ribosomal protein L2, domain 3"/>
    <property type="match status" value="1"/>
</dbReference>
<dbReference type="HAMAP" id="MF_01320_B">
    <property type="entry name" value="Ribosomal_uL2_B"/>
    <property type="match status" value="1"/>
</dbReference>
<dbReference type="InterPro" id="IPR012340">
    <property type="entry name" value="NA-bd_OB-fold"/>
</dbReference>
<dbReference type="InterPro" id="IPR014722">
    <property type="entry name" value="Rib_uL2_dom2"/>
</dbReference>
<dbReference type="InterPro" id="IPR002171">
    <property type="entry name" value="Ribosomal_uL2"/>
</dbReference>
<dbReference type="InterPro" id="IPR005880">
    <property type="entry name" value="Ribosomal_uL2_bac/org-type"/>
</dbReference>
<dbReference type="InterPro" id="IPR022669">
    <property type="entry name" value="Ribosomal_uL2_C"/>
</dbReference>
<dbReference type="InterPro" id="IPR022671">
    <property type="entry name" value="Ribosomal_uL2_CS"/>
</dbReference>
<dbReference type="InterPro" id="IPR014726">
    <property type="entry name" value="Ribosomal_uL2_dom3"/>
</dbReference>
<dbReference type="InterPro" id="IPR022666">
    <property type="entry name" value="Ribosomal_uL2_RNA-bd_dom"/>
</dbReference>
<dbReference type="InterPro" id="IPR008991">
    <property type="entry name" value="Translation_prot_SH3-like_sf"/>
</dbReference>
<dbReference type="NCBIfam" id="TIGR01171">
    <property type="entry name" value="rplB_bact"/>
    <property type="match status" value="1"/>
</dbReference>
<dbReference type="PANTHER" id="PTHR13691:SF5">
    <property type="entry name" value="LARGE RIBOSOMAL SUBUNIT PROTEIN UL2M"/>
    <property type="match status" value="1"/>
</dbReference>
<dbReference type="PANTHER" id="PTHR13691">
    <property type="entry name" value="RIBOSOMAL PROTEIN L2"/>
    <property type="match status" value="1"/>
</dbReference>
<dbReference type="Pfam" id="PF00181">
    <property type="entry name" value="Ribosomal_L2"/>
    <property type="match status" value="1"/>
</dbReference>
<dbReference type="Pfam" id="PF03947">
    <property type="entry name" value="Ribosomal_L2_C"/>
    <property type="match status" value="1"/>
</dbReference>
<dbReference type="PIRSF" id="PIRSF002158">
    <property type="entry name" value="Ribosomal_L2"/>
    <property type="match status" value="1"/>
</dbReference>
<dbReference type="SMART" id="SM01383">
    <property type="entry name" value="Ribosomal_L2"/>
    <property type="match status" value="1"/>
</dbReference>
<dbReference type="SMART" id="SM01382">
    <property type="entry name" value="Ribosomal_L2_C"/>
    <property type="match status" value="1"/>
</dbReference>
<dbReference type="SUPFAM" id="SSF50249">
    <property type="entry name" value="Nucleic acid-binding proteins"/>
    <property type="match status" value="1"/>
</dbReference>
<dbReference type="SUPFAM" id="SSF50104">
    <property type="entry name" value="Translation proteins SH3-like domain"/>
    <property type="match status" value="1"/>
</dbReference>
<dbReference type="PROSITE" id="PS00467">
    <property type="entry name" value="RIBOSOMAL_L2"/>
    <property type="match status" value="1"/>
</dbReference>
<evidence type="ECO:0000255" key="1">
    <source>
        <dbReference type="HAMAP-Rule" id="MF_01320"/>
    </source>
</evidence>
<evidence type="ECO:0000256" key="2">
    <source>
        <dbReference type="SAM" id="MobiDB-lite"/>
    </source>
</evidence>
<evidence type="ECO:0000305" key="3"/>
<sequence>MAVVKCKPTSPGRRHVVKVVNPELHKGKPFAPLVEKNSKSGGRNNNGRITTRHIGGGHKQAYRIVDFKRNKDGIPAVVERLEYDPNRSANIALVLYKDGERRYILAPKGLKAGDQIQSGVDAAIKAGNTLPMRNIPVGSTVHNVEMKPGKGGQLARSAGTYVQIVARDGAYVTLRLRSGEMRKVEADCRATLGEVGNAEHMLRVLGKAGAARWRGVRPTVRGTAMNPVDHPHGGGEGRNFGKHPVTPWGVQTKGKKTRSNKRTDKFIVRRRSK</sequence>
<feature type="chain" id="PRO_1000141613" description="Large ribosomal subunit protein uL2">
    <location>
        <begin position="1"/>
        <end position="273"/>
    </location>
</feature>
<feature type="region of interest" description="Disordered" evidence="2">
    <location>
        <begin position="28"/>
        <end position="53"/>
    </location>
</feature>
<feature type="region of interest" description="Disordered" evidence="2">
    <location>
        <begin position="221"/>
        <end position="273"/>
    </location>
</feature>
<feature type="compositionally biased region" description="Low complexity" evidence="2">
    <location>
        <begin position="39"/>
        <end position="48"/>
    </location>
</feature>
<reference key="1">
    <citation type="journal article" date="2011" name="J. Bacteriol.">
        <title>Comparative genomics of 28 Salmonella enterica isolates: evidence for CRISPR-mediated adaptive sublineage evolution.</title>
        <authorList>
            <person name="Fricke W.F."/>
            <person name="Mammel M.K."/>
            <person name="McDermott P.F."/>
            <person name="Tartera C."/>
            <person name="White D.G."/>
            <person name="Leclerc J.E."/>
            <person name="Ravel J."/>
            <person name="Cebula T.A."/>
        </authorList>
    </citation>
    <scope>NUCLEOTIDE SEQUENCE [LARGE SCALE GENOMIC DNA]</scope>
    <source>
        <strain>CVM19633</strain>
    </source>
</reference>
<comment type="function">
    <text evidence="1">One of the primary rRNA binding proteins. Required for association of the 30S and 50S subunits to form the 70S ribosome, for tRNA binding and peptide bond formation. It has been suggested to have peptidyltransferase activity; this is somewhat controversial. Makes several contacts with the 16S rRNA in the 70S ribosome.</text>
</comment>
<comment type="subunit">
    <text evidence="1">Part of the 50S ribosomal subunit. Forms a bridge to the 30S subunit in the 70S ribosome.</text>
</comment>
<comment type="similarity">
    <text evidence="1">Belongs to the universal ribosomal protein uL2 family.</text>
</comment>
<proteinExistence type="inferred from homology"/>
<organism>
    <name type="scientific">Salmonella schwarzengrund (strain CVM19633)</name>
    <dbReference type="NCBI Taxonomy" id="439843"/>
    <lineage>
        <taxon>Bacteria</taxon>
        <taxon>Pseudomonadati</taxon>
        <taxon>Pseudomonadota</taxon>
        <taxon>Gammaproteobacteria</taxon>
        <taxon>Enterobacterales</taxon>
        <taxon>Enterobacteriaceae</taxon>
        <taxon>Salmonella</taxon>
    </lineage>
</organism>
<keyword id="KW-0687">Ribonucleoprotein</keyword>
<keyword id="KW-0689">Ribosomal protein</keyword>
<keyword id="KW-0694">RNA-binding</keyword>
<keyword id="KW-0699">rRNA-binding</keyword>